<comment type="function">
    <text evidence="1">Catalyzes the transformation of pimelate into pimeloyl-CoA with concomitant hydrolysis of ATP to AMP.</text>
</comment>
<comment type="catalytic activity">
    <reaction evidence="1">
        <text>heptanedioate + ATP + CoA = 6-carboxyhexanoyl-CoA + AMP + diphosphate</text>
        <dbReference type="Rhea" id="RHEA:14781"/>
        <dbReference type="ChEBI" id="CHEBI:30616"/>
        <dbReference type="ChEBI" id="CHEBI:33019"/>
        <dbReference type="ChEBI" id="CHEBI:36165"/>
        <dbReference type="ChEBI" id="CHEBI:57287"/>
        <dbReference type="ChEBI" id="CHEBI:57360"/>
        <dbReference type="ChEBI" id="CHEBI:456215"/>
        <dbReference type="EC" id="6.2.1.14"/>
    </reaction>
</comment>
<comment type="cofactor">
    <cofactor evidence="1">
        <name>Mg(2+)</name>
        <dbReference type="ChEBI" id="CHEBI:18420"/>
    </cofactor>
</comment>
<comment type="pathway">
    <text evidence="1">Metabolic intermediate metabolism; pimeloyl-CoA biosynthesis; pimeloyl-CoA from pimelate: step 1/1.</text>
</comment>
<comment type="subunit">
    <text evidence="1">Homodimer.</text>
</comment>
<comment type="similarity">
    <text evidence="1">Belongs to the BioW family.</text>
</comment>
<gene>
    <name evidence="1" type="primary">bioW</name>
    <name type="ordered locus">Pcar_1666</name>
</gene>
<sequence>MSESLYSIRMRSSCDERHISGAENLAPAERLHALASAMVRRALAHDKGQAEQIFLSIEKVDTADIVCHGLPDIRTIRVASVEQGRDAALSMLEKAGVNPQAARRAMATMARGAAPNGDSMRGAMLVDASTGQRLEKDRYRGVRVSRMDLDEQTSVRLKNLLQTAGLDNPHVREALVLAAKVIHAPGVIAELCWSDDPGYTAGYVAGASLGYVRFPLLKPAGEVRGGRAFFLSSDADLAQLIPYLERQVVLIDRIGRIFPDERWPA</sequence>
<feature type="chain" id="PRO_0000412087" description="6-carboxyhexanoate--CoA ligase">
    <location>
        <begin position="1"/>
        <end position="265"/>
    </location>
</feature>
<accession>Q3A3Z7</accession>
<organism>
    <name type="scientific">Syntrophotalea carbinolica (strain DSM 2380 / NBRC 103641 / GraBd1)</name>
    <name type="common">Pelobacter carbinolicus</name>
    <dbReference type="NCBI Taxonomy" id="338963"/>
    <lineage>
        <taxon>Bacteria</taxon>
        <taxon>Pseudomonadati</taxon>
        <taxon>Thermodesulfobacteriota</taxon>
        <taxon>Desulfuromonadia</taxon>
        <taxon>Desulfuromonadales</taxon>
        <taxon>Syntrophotaleaceae</taxon>
        <taxon>Syntrophotalea</taxon>
    </lineage>
</organism>
<keyword id="KW-0067">ATP-binding</keyword>
<keyword id="KW-0093">Biotin biosynthesis</keyword>
<keyword id="KW-0436">Ligase</keyword>
<keyword id="KW-0460">Magnesium</keyword>
<keyword id="KW-0547">Nucleotide-binding</keyword>
<keyword id="KW-1185">Reference proteome</keyword>
<dbReference type="EC" id="6.2.1.14" evidence="1"/>
<dbReference type="EMBL" id="CP000142">
    <property type="protein sequence ID" value="ABA88910.1"/>
    <property type="molecule type" value="Genomic_DNA"/>
</dbReference>
<dbReference type="RefSeq" id="WP_011341400.1">
    <property type="nucleotide sequence ID" value="NC_007498.2"/>
</dbReference>
<dbReference type="SMR" id="Q3A3Z7"/>
<dbReference type="STRING" id="338963.Pcar_1666"/>
<dbReference type="KEGG" id="pca:Pcar_1666"/>
<dbReference type="eggNOG" id="COG1424">
    <property type="taxonomic scope" value="Bacteria"/>
</dbReference>
<dbReference type="HOGENOM" id="CLU_076858_0_0_7"/>
<dbReference type="OrthoDB" id="9792985at2"/>
<dbReference type="UniPathway" id="UPA00999">
    <property type="reaction ID" value="UER00351"/>
</dbReference>
<dbReference type="Proteomes" id="UP000002534">
    <property type="component" value="Chromosome"/>
</dbReference>
<dbReference type="GO" id="GO:0042410">
    <property type="term" value="F:6-carboxyhexanoate-CoA ligase activity"/>
    <property type="evidence" value="ECO:0007669"/>
    <property type="project" value="UniProtKB-UniRule"/>
</dbReference>
<dbReference type="GO" id="GO:0005524">
    <property type="term" value="F:ATP binding"/>
    <property type="evidence" value="ECO:0007669"/>
    <property type="project" value="UniProtKB-KW"/>
</dbReference>
<dbReference type="GO" id="GO:0000287">
    <property type="term" value="F:magnesium ion binding"/>
    <property type="evidence" value="ECO:0007669"/>
    <property type="project" value="UniProtKB-UniRule"/>
</dbReference>
<dbReference type="GO" id="GO:0009102">
    <property type="term" value="P:biotin biosynthetic process"/>
    <property type="evidence" value="ECO:0007669"/>
    <property type="project" value="UniProtKB-UniRule"/>
</dbReference>
<dbReference type="HAMAP" id="MF_00668">
    <property type="entry name" value="BioW"/>
    <property type="match status" value="1"/>
</dbReference>
<dbReference type="InterPro" id="IPR005499">
    <property type="entry name" value="BioW"/>
</dbReference>
<dbReference type="NCBIfam" id="TIGR01204">
    <property type="entry name" value="bioW"/>
    <property type="match status" value="1"/>
</dbReference>
<dbReference type="NCBIfam" id="NF002360">
    <property type="entry name" value="PRK01322.1"/>
    <property type="match status" value="1"/>
</dbReference>
<dbReference type="Pfam" id="PF03744">
    <property type="entry name" value="BioW"/>
    <property type="match status" value="1"/>
</dbReference>
<evidence type="ECO:0000255" key="1">
    <source>
        <dbReference type="HAMAP-Rule" id="MF_00668"/>
    </source>
</evidence>
<protein>
    <recommendedName>
        <fullName evidence="1">6-carboxyhexanoate--CoA ligase</fullName>
        <ecNumber evidence="1">6.2.1.14</ecNumber>
    </recommendedName>
    <alternativeName>
        <fullName evidence="1">Pimeloyl-CoA synthase</fullName>
    </alternativeName>
</protein>
<name>BIOW_SYNC1</name>
<proteinExistence type="inferred from homology"/>
<reference key="1">
    <citation type="submission" date="2005-10" db="EMBL/GenBank/DDBJ databases">
        <title>Complete sequence of Pelobacter carbinolicus DSM 2380.</title>
        <authorList>
            <person name="Copeland A."/>
            <person name="Lucas S."/>
            <person name="Lapidus A."/>
            <person name="Barry K."/>
            <person name="Detter J.C."/>
            <person name="Glavina T."/>
            <person name="Hammon N."/>
            <person name="Israni S."/>
            <person name="Pitluck S."/>
            <person name="Chertkov O."/>
            <person name="Schmutz J."/>
            <person name="Larimer F."/>
            <person name="Land M."/>
            <person name="Kyrpides N."/>
            <person name="Ivanova N."/>
            <person name="Richardson P."/>
        </authorList>
    </citation>
    <scope>NUCLEOTIDE SEQUENCE [LARGE SCALE GENOMIC DNA]</scope>
    <source>
        <strain>DSM 2380 / NBRC 103641 / GraBd1</strain>
    </source>
</reference>